<sequence>MNATKAPGGIKPKHQRLVLLVIALVALIGAGLLAAYALSNQASYFYVPNDLVKNPPEQGRAIRLGGMVQKGSLKTRADGITIDFVVGDGKARVPVRYTGITPDLFVEGSGVVAEGRMEGQTFVADNLLAKHDENYVPRQMGDMTKAQAEAVVAETK</sequence>
<gene>
    <name evidence="1" type="primary">ccmE</name>
    <name evidence="1" type="synonym">cycJ</name>
    <name type="ordered locus">Saro_1389</name>
</gene>
<keyword id="KW-0997">Cell inner membrane</keyword>
<keyword id="KW-1003">Cell membrane</keyword>
<keyword id="KW-0201">Cytochrome c-type biogenesis</keyword>
<keyword id="KW-0349">Heme</keyword>
<keyword id="KW-0408">Iron</keyword>
<keyword id="KW-0472">Membrane</keyword>
<keyword id="KW-0479">Metal-binding</keyword>
<keyword id="KW-1185">Reference proteome</keyword>
<keyword id="KW-0735">Signal-anchor</keyword>
<keyword id="KW-0812">Transmembrane</keyword>
<keyword id="KW-1133">Transmembrane helix</keyword>
<protein>
    <recommendedName>
        <fullName evidence="1">Cytochrome c-type biogenesis protein CcmE</fullName>
    </recommendedName>
    <alternativeName>
        <fullName evidence="1">Cytochrome c maturation protein E</fullName>
    </alternativeName>
    <alternativeName>
        <fullName evidence="1">Heme chaperone CcmE</fullName>
    </alternativeName>
</protein>
<reference key="1">
    <citation type="submission" date="2006-01" db="EMBL/GenBank/DDBJ databases">
        <title>Complete sequence of Novosphingobium aromaticivorans DSM 12444.</title>
        <authorList>
            <consortium name="US DOE Joint Genome Institute"/>
            <person name="Copeland A."/>
            <person name="Lucas S."/>
            <person name="Lapidus A."/>
            <person name="Barry K."/>
            <person name="Detter J.C."/>
            <person name="Glavina T."/>
            <person name="Hammon N."/>
            <person name="Israni S."/>
            <person name="Pitluck S."/>
            <person name="Chain P."/>
            <person name="Malfatti S."/>
            <person name="Shin M."/>
            <person name="Vergez L."/>
            <person name="Schmutz J."/>
            <person name="Larimer F."/>
            <person name="Land M."/>
            <person name="Kyrpides N."/>
            <person name="Ivanova N."/>
            <person name="Fredrickson J."/>
            <person name="Balkwill D."/>
            <person name="Romine M.F."/>
            <person name="Richardson P."/>
        </authorList>
    </citation>
    <scope>NUCLEOTIDE SEQUENCE [LARGE SCALE GENOMIC DNA]</scope>
    <source>
        <strain>ATCC 700278 / DSM 12444 / CCUG 56034 / CIP 105152 / NBRC 16084 / F199</strain>
    </source>
</reference>
<comment type="function">
    <text evidence="1">Heme chaperone required for the biogenesis of c-type cytochromes. Transiently binds heme delivered by CcmC and transfers the heme to apo-cytochromes in a process facilitated by CcmF and CcmH.</text>
</comment>
<comment type="subcellular location">
    <subcellularLocation>
        <location evidence="1">Cell inner membrane</location>
        <topology evidence="1">Single-pass type II membrane protein</topology>
        <orientation evidence="1">Periplasmic side</orientation>
    </subcellularLocation>
</comment>
<comment type="similarity">
    <text evidence="1">Belongs to the CcmE/CycJ family.</text>
</comment>
<organism>
    <name type="scientific">Novosphingobium aromaticivorans (strain ATCC 700278 / DSM 12444 / CCUG 56034 / CIP 105152 / NBRC 16084 / F199)</name>
    <dbReference type="NCBI Taxonomy" id="279238"/>
    <lineage>
        <taxon>Bacteria</taxon>
        <taxon>Pseudomonadati</taxon>
        <taxon>Pseudomonadota</taxon>
        <taxon>Alphaproteobacteria</taxon>
        <taxon>Sphingomonadales</taxon>
        <taxon>Sphingomonadaceae</taxon>
        <taxon>Novosphingobium</taxon>
    </lineage>
</organism>
<proteinExistence type="inferred from homology"/>
<evidence type="ECO:0000255" key="1">
    <source>
        <dbReference type="HAMAP-Rule" id="MF_01959"/>
    </source>
</evidence>
<name>CCME_NOVAD</name>
<accession>Q2G8J0</accession>
<dbReference type="EMBL" id="CP000248">
    <property type="protein sequence ID" value="ABD25833.1"/>
    <property type="molecule type" value="Genomic_DNA"/>
</dbReference>
<dbReference type="RefSeq" id="WP_011445047.1">
    <property type="nucleotide sequence ID" value="NC_007794.1"/>
</dbReference>
<dbReference type="SMR" id="Q2G8J0"/>
<dbReference type="STRING" id="279238.Saro_1389"/>
<dbReference type="KEGG" id="nar:Saro_1389"/>
<dbReference type="eggNOG" id="COG2332">
    <property type="taxonomic scope" value="Bacteria"/>
</dbReference>
<dbReference type="HOGENOM" id="CLU_079503_1_1_5"/>
<dbReference type="Proteomes" id="UP000009134">
    <property type="component" value="Chromosome"/>
</dbReference>
<dbReference type="GO" id="GO:0005886">
    <property type="term" value="C:plasma membrane"/>
    <property type="evidence" value="ECO:0007669"/>
    <property type="project" value="UniProtKB-SubCell"/>
</dbReference>
<dbReference type="GO" id="GO:0020037">
    <property type="term" value="F:heme binding"/>
    <property type="evidence" value="ECO:0007669"/>
    <property type="project" value="InterPro"/>
</dbReference>
<dbReference type="GO" id="GO:0046872">
    <property type="term" value="F:metal ion binding"/>
    <property type="evidence" value="ECO:0007669"/>
    <property type="project" value="UniProtKB-KW"/>
</dbReference>
<dbReference type="GO" id="GO:0017004">
    <property type="term" value="P:cytochrome complex assembly"/>
    <property type="evidence" value="ECO:0007669"/>
    <property type="project" value="UniProtKB-KW"/>
</dbReference>
<dbReference type="Gene3D" id="2.40.50.140">
    <property type="entry name" value="Nucleic acid-binding proteins"/>
    <property type="match status" value="1"/>
</dbReference>
<dbReference type="HAMAP" id="MF_01959">
    <property type="entry name" value="CcmE"/>
    <property type="match status" value="1"/>
</dbReference>
<dbReference type="InterPro" id="IPR004329">
    <property type="entry name" value="CcmE"/>
</dbReference>
<dbReference type="InterPro" id="IPR036127">
    <property type="entry name" value="CcmE-like_sf"/>
</dbReference>
<dbReference type="InterPro" id="IPR012340">
    <property type="entry name" value="NA-bd_OB-fold"/>
</dbReference>
<dbReference type="NCBIfam" id="NF009727">
    <property type="entry name" value="PRK13254.1-1"/>
    <property type="match status" value="1"/>
</dbReference>
<dbReference type="NCBIfam" id="NF009731">
    <property type="entry name" value="PRK13254.1-5"/>
    <property type="match status" value="1"/>
</dbReference>
<dbReference type="PANTHER" id="PTHR34128">
    <property type="entry name" value="CYTOCHROME C-TYPE BIOGENESIS PROTEIN CCME HOMOLOG, MITOCHONDRIAL"/>
    <property type="match status" value="1"/>
</dbReference>
<dbReference type="PANTHER" id="PTHR34128:SF2">
    <property type="entry name" value="CYTOCHROME C-TYPE BIOGENESIS PROTEIN CCME HOMOLOG, MITOCHONDRIAL"/>
    <property type="match status" value="1"/>
</dbReference>
<dbReference type="Pfam" id="PF03100">
    <property type="entry name" value="CcmE"/>
    <property type="match status" value="1"/>
</dbReference>
<dbReference type="SUPFAM" id="SSF82093">
    <property type="entry name" value="Heme chaperone CcmE"/>
    <property type="match status" value="1"/>
</dbReference>
<feature type="chain" id="PRO_0000238828" description="Cytochrome c-type biogenesis protein CcmE">
    <location>
        <begin position="1"/>
        <end position="156"/>
    </location>
</feature>
<feature type="topological domain" description="Cytoplasmic" evidence="1">
    <location>
        <begin position="1"/>
        <end position="16"/>
    </location>
</feature>
<feature type="transmembrane region" description="Helical; Signal-anchor for type II membrane protein" evidence="1">
    <location>
        <begin position="17"/>
        <end position="37"/>
    </location>
</feature>
<feature type="topological domain" description="Periplasmic" evidence="1">
    <location>
        <begin position="38"/>
        <end position="156"/>
    </location>
</feature>
<feature type="binding site" description="covalent" evidence="1">
    <location>
        <position position="131"/>
    </location>
    <ligand>
        <name>heme</name>
        <dbReference type="ChEBI" id="CHEBI:30413"/>
    </ligand>
</feature>
<feature type="binding site" description="axial binding residue" evidence="1">
    <location>
        <position position="135"/>
    </location>
    <ligand>
        <name>heme</name>
        <dbReference type="ChEBI" id="CHEBI:30413"/>
    </ligand>
    <ligandPart>
        <name>Fe</name>
        <dbReference type="ChEBI" id="CHEBI:18248"/>
    </ligandPart>
</feature>